<accession>A0AHX5</accession>
<comment type="function">
    <text evidence="1">The UvrABC repair system catalyzes the recognition and processing of DNA lesions. UvrC both incises the 5' and 3' sides of the lesion. The N-terminal half is responsible for the 3' incision and the C-terminal half is responsible for the 5' incision.</text>
</comment>
<comment type="subunit">
    <text evidence="1">Interacts with UvrB in an incision complex.</text>
</comment>
<comment type="subcellular location">
    <subcellularLocation>
        <location evidence="1">Cytoplasm</location>
    </subcellularLocation>
</comment>
<comment type="similarity">
    <text evidence="1">Belongs to the UvrC family.</text>
</comment>
<feature type="chain" id="PRO_1000077805" description="UvrABC system protein C">
    <location>
        <begin position="1"/>
        <end position="603"/>
    </location>
</feature>
<feature type="domain" description="GIY-YIG" evidence="1">
    <location>
        <begin position="15"/>
        <end position="92"/>
    </location>
</feature>
<feature type="domain" description="UVR" evidence="1">
    <location>
        <begin position="197"/>
        <end position="232"/>
    </location>
</feature>
<reference key="1">
    <citation type="journal article" date="2006" name="J. Bacteriol.">
        <title>Whole-genome sequence of Listeria welshimeri reveals common steps in genome reduction with Listeria innocua as compared to Listeria monocytogenes.</title>
        <authorList>
            <person name="Hain T."/>
            <person name="Steinweg C."/>
            <person name="Kuenne C.T."/>
            <person name="Billion A."/>
            <person name="Ghai R."/>
            <person name="Chatterjee S.S."/>
            <person name="Domann E."/>
            <person name="Kaerst U."/>
            <person name="Goesmann A."/>
            <person name="Bekel T."/>
            <person name="Bartels D."/>
            <person name="Kaiser O."/>
            <person name="Meyer F."/>
            <person name="Puehler A."/>
            <person name="Weisshaar B."/>
            <person name="Wehland J."/>
            <person name="Liang C."/>
            <person name="Dandekar T."/>
            <person name="Lampidis R."/>
            <person name="Kreft J."/>
            <person name="Goebel W."/>
            <person name="Chakraborty T."/>
        </authorList>
    </citation>
    <scope>NUCLEOTIDE SEQUENCE [LARGE SCALE GENOMIC DNA]</scope>
    <source>
        <strain>ATCC 35897 / DSM 20650 / CCUG 15529 / CIP 8149 / NCTC 11857 / SLCC 5334 / V8</strain>
    </source>
</reference>
<organism>
    <name type="scientific">Listeria welshimeri serovar 6b (strain ATCC 35897 / DSM 20650 / CCUG 15529 / CIP 8149 / NCTC 11857 / SLCC 5334 / V8)</name>
    <dbReference type="NCBI Taxonomy" id="386043"/>
    <lineage>
        <taxon>Bacteria</taxon>
        <taxon>Bacillati</taxon>
        <taxon>Bacillota</taxon>
        <taxon>Bacilli</taxon>
        <taxon>Bacillales</taxon>
        <taxon>Listeriaceae</taxon>
        <taxon>Listeria</taxon>
    </lineage>
</organism>
<proteinExistence type="inferred from homology"/>
<dbReference type="EMBL" id="AM263198">
    <property type="protein sequence ID" value="CAK20607.1"/>
    <property type="molecule type" value="Genomic_DNA"/>
</dbReference>
<dbReference type="RefSeq" id="WP_011702003.1">
    <property type="nucleotide sequence ID" value="NC_008555.1"/>
</dbReference>
<dbReference type="SMR" id="A0AHX5"/>
<dbReference type="STRING" id="386043.lwe1189"/>
<dbReference type="GeneID" id="61189072"/>
<dbReference type="KEGG" id="lwe:lwe1189"/>
<dbReference type="eggNOG" id="COG0322">
    <property type="taxonomic scope" value="Bacteria"/>
</dbReference>
<dbReference type="HOGENOM" id="CLU_014841_3_2_9"/>
<dbReference type="OrthoDB" id="9804933at2"/>
<dbReference type="Proteomes" id="UP000000779">
    <property type="component" value="Chromosome"/>
</dbReference>
<dbReference type="GO" id="GO:0005737">
    <property type="term" value="C:cytoplasm"/>
    <property type="evidence" value="ECO:0007669"/>
    <property type="project" value="UniProtKB-SubCell"/>
</dbReference>
<dbReference type="GO" id="GO:0009380">
    <property type="term" value="C:excinuclease repair complex"/>
    <property type="evidence" value="ECO:0007669"/>
    <property type="project" value="InterPro"/>
</dbReference>
<dbReference type="GO" id="GO:0003677">
    <property type="term" value="F:DNA binding"/>
    <property type="evidence" value="ECO:0007669"/>
    <property type="project" value="UniProtKB-UniRule"/>
</dbReference>
<dbReference type="GO" id="GO:0009381">
    <property type="term" value="F:excinuclease ABC activity"/>
    <property type="evidence" value="ECO:0007669"/>
    <property type="project" value="UniProtKB-UniRule"/>
</dbReference>
<dbReference type="GO" id="GO:0006289">
    <property type="term" value="P:nucleotide-excision repair"/>
    <property type="evidence" value="ECO:0007669"/>
    <property type="project" value="UniProtKB-UniRule"/>
</dbReference>
<dbReference type="GO" id="GO:0009432">
    <property type="term" value="P:SOS response"/>
    <property type="evidence" value="ECO:0007669"/>
    <property type="project" value="UniProtKB-UniRule"/>
</dbReference>
<dbReference type="CDD" id="cd10434">
    <property type="entry name" value="GIY-YIG_UvrC_Cho"/>
    <property type="match status" value="1"/>
</dbReference>
<dbReference type="FunFam" id="1.10.150.20:FF:000005">
    <property type="entry name" value="UvrABC system protein C"/>
    <property type="match status" value="1"/>
</dbReference>
<dbReference type="FunFam" id="3.30.420.340:FF:000002">
    <property type="entry name" value="UvrABC system protein C"/>
    <property type="match status" value="1"/>
</dbReference>
<dbReference type="FunFam" id="3.40.1440.10:FF:000001">
    <property type="entry name" value="UvrABC system protein C"/>
    <property type="match status" value="1"/>
</dbReference>
<dbReference type="FunFam" id="4.10.860.10:FF:000002">
    <property type="entry name" value="UvrABC system protein C"/>
    <property type="match status" value="1"/>
</dbReference>
<dbReference type="Gene3D" id="1.10.150.20">
    <property type="entry name" value="5' to 3' exonuclease, C-terminal subdomain"/>
    <property type="match status" value="1"/>
</dbReference>
<dbReference type="Gene3D" id="3.40.1440.10">
    <property type="entry name" value="GIY-YIG endonuclease"/>
    <property type="match status" value="1"/>
</dbReference>
<dbReference type="Gene3D" id="4.10.860.10">
    <property type="entry name" value="UVR domain"/>
    <property type="match status" value="1"/>
</dbReference>
<dbReference type="Gene3D" id="3.30.420.340">
    <property type="entry name" value="UvrC, RNAse H endonuclease domain"/>
    <property type="match status" value="1"/>
</dbReference>
<dbReference type="HAMAP" id="MF_00203">
    <property type="entry name" value="UvrC"/>
    <property type="match status" value="1"/>
</dbReference>
<dbReference type="InterPro" id="IPR041663">
    <property type="entry name" value="DisA/LigA_HHH"/>
</dbReference>
<dbReference type="InterPro" id="IPR000305">
    <property type="entry name" value="GIY-YIG_endonuc"/>
</dbReference>
<dbReference type="InterPro" id="IPR035901">
    <property type="entry name" value="GIY-YIG_endonuc_sf"/>
</dbReference>
<dbReference type="InterPro" id="IPR047296">
    <property type="entry name" value="GIY-YIG_UvrC_Cho"/>
</dbReference>
<dbReference type="InterPro" id="IPR010994">
    <property type="entry name" value="RuvA_2-like"/>
</dbReference>
<dbReference type="InterPro" id="IPR001943">
    <property type="entry name" value="UVR_dom"/>
</dbReference>
<dbReference type="InterPro" id="IPR036876">
    <property type="entry name" value="UVR_dom_sf"/>
</dbReference>
<dbReference type="InterPro" id="IPR050066">
    <property type="entry name" value="UvrABC_protein_C"/>
</dbReference>
<dbReference type="InterPro" id="IPR004791">
    <property type="entry name" value="UvrC"/>
</dbReference>
<dbReference type="InterPro" id="IPR001162">
    <property type="entry name" value="UvrC_RNase_H_dom"/>
</dbReference>
<dbReference type="InterPro" id="IPR038476">
    <property type="entry name" value="UvrC_RNase_H_dom_sf"/>
</dbReference>
<dbReference type="NCBIfam" id="TIGR00194">
    <property type="entry name" value="uvrC"/>
    <property type="match status" value="1"/>
</dbReference>
<dbReference type="PANTHER" id="PTHR30562:SF1">
    <property type="entry name" value="UVRABC SYSTEM PROTEIN C"/>
    <property type="match status" value="1"/>
</dbReference>
<dbReference type="PANTHER" id="PTHR30562">
    <property type="entry name" value="UVRC/OXIDOREDUCTASE"/>
    <property type="match status" value="1"/>
</dbReference>
<dbReference type="Pfam" id="PF01541">
    <property type="entry name" value="GIY-YIG"/>
    <property type="match status" value="1"/>
</dbReference>
<dbReference type="Pfam" id="PF12826">
    <property type="entry name" value="HHH_2"/>
    <property type="match status" value="1"/>
</dbReference>
<dbReference type="Pfam" id="PF02151">
    <property type="entry name" value="UVR"/>
    <property type="match status" value="1"/>
</dbReference>
<dbReference type="Pfam" id="PF22920">
    <property type="entry name" value="UvrC_RNaseH"/>
    <property type="match status" value="1"/>
</dbReference>
<dbReference type="Pfam" id="PF08459">
    <property type="entry name" value="UvrC_RNaseH_dom"/>
    <property type="match status" value="1"/>
</dbReference>
<dbReference type="SMART" id="SM00465">
    <property type="entry name" value="GIYc"/>
    <property type="match status" value="1"/>
</dbReference>
<dbReference type="SUPFAM" id="SSF46600">
    <property type="entry name" value="C-terminal UvrC-binding domain of UvrB"/>
    <property type="match status" value="1"/>
</dbReference>
<dbReference type="SUPFAM" id="SSF82771">
    <property type="entry name" value="GIY-YIG endonuclease"/>
    <property type="match status" value="1"/>
</dbReference>
<dbReference type="SUPFAM" id="SSF47781">
    <property type="entry name" value="RuvA domain 2-like"/>
    <property type="match status" value="1"/>
</dbReference>
<dbReference type="PROSITE" id="PS50164">
    <property type="entry name" value="GIY_YIG"/>
    <property type="match status" value="1"/>
</dbReference>
<dbReference type="PROSITE" id="PS50151">
    <property type="entry name" value="UVR"/>
    <property type="match status" value="1"/>
</dbReference>
<dbReference type="PROSITE" id="PS50165">
    <property type="entry name" value="UVRC"/>
    <property type="match status" value="1"/>
</dbReference>
<evidence type="ECO:0000255" key="1">
    <source>
        <dbReference type="HAMAP-Rule" id="MF_00203"/>
    </source>
</evidence>
<sequence>MSSEHIQNKLALLPDQPGCYLMKDRQGTIIYVGKAKVLKNRVRSYFSGTHDSKTQRLVQEIVDFEYIVTSSNVEALLLEINLIKKHDPRFNIRLKDDKTYPFIKITNERHPRLIITRQVKKDKGKYFGPYPNVYAANEVKRILDRLYPLRKCSTLPNKVCLYYHLGQCLAPCVFDVEASKYKEMQDEIVAFLNGGYKTVKNDLMKKMQVAAENMEFEKAGEFRDQINAIETTMEKQKMTMNDFVDRDVFGYAIDKGWMCVQVFFIRQGKLIERDVSQFPFYNDADEDFLTFIGQFYQKANHIPPKEIYLPDDVDSEAVQAVVPDTKIIVPQRGNKKELVKLAYKNAKIALNEKFMLLERNEERTVGAVERLGEAMGIPTPSRVEAFDNSNIHGTDPVSAMVTFLDGKPSKNDYRKYKIKTVEGPDDYATMREVIRRRYWRVLKERLPMPDLILIDGGKGQIDSAKDVLINELGLDIPVAGLAKDDKHRTSQLLFGDPLEIVPLERNSQEFYLLQRMQDEVHRFAITFHRQLRSKTGFQSILDGIPGVGPGRKKKLLKHFGSMKKLKEASVEEIKEAGVPMNVAEEVHKHITTFNEKAKNTEQK</sequence>
<keyword id="KW-0963">Cytoplasm</keyword>
<keyword id="KW-0227">DNA damage</keyword>
<keyword id="KW-0228">DNA excision</keyword>
<keyword id="KW-0234">DNA repair</keyword>
<keyword id="KW-0267">Excision nuclease</keyword>
<keyword id="KW-0742">SOS response</keyword>
<gene>
    <name evidence="1" type="primary">uvrC</name>
    <name type="ordered locus">lwe1189</name>
</gene>
<protein>
    <recommendedName>
        <fullName evidence="1">UvrABC system protein C</fullName>
        <shortName evidence="1">Protein UvrC</shortName>
    </recommendedName>
    <alternativeName>
        <fullName evidence="1">Excinuclease ABC subunit C</fullName>
    </alternativeName>
</protein>
<name>UVRC_LISW6</name>